<keyword id="KW-0131">Cell cycle</keyword>
<keyword id="KW-0132">Cell division</keyword>
<keyword id="KW-0498">Mitosis</keyword>
<keyword id="KW-1185">Reference proteome</keyword>
<keyword id="KW-0833">Ubl conjugation pathway</keyword>
<protein>
    <recommendedName>
        <fullName>Anaphase-promoting complex subunit 5</fullName>
    </recommendedName>
    <alternativeName>
        <fullName>20S cyclosome/APC complex protein apc5</fullName>
    </alternativeName>
</protein>
<organism>
    <name type="scientific">Schizosaccharomyces pombe (strain 972 / ATCC 24843)</name>
    <name type="common">Fission yeast</name>
    <dbReference type="NCBI Taxonomy" id="284812"/>
    <lineage>
        <taxon>Eukaryota</taxon>
        <taxon>Fungi</taxon>
        <taxon>Dikarya</taxon>
        <taxon>Ascomycota</taxon>
        <taxon>Taphrinomycotina</taxon>
        <taxon>Schizosaccharomycetes</taxon>
        <taxon>Schizosaccharomycetales</taxon>
        <taxon>Schizosaccharomycetaceae</taxon>
        <taxon>Schizosaccharomyces</taxon>
    </lineage>
</organism>
<comment type="function">
    <text>Component of the anaphase promoting complex/cyclosome (APC/C), a cell cycle-regulated E3 ubiquitin-protein ligase complex that controls progression through mitosis and the G1 phase of the cell cycle. The APC/C is thought to confer substrate specificity and, in the presence of ubiquitin-conjugating E2 enzymes, it catalyzes the formation of protein-ubiquitin conjugates that are subsequently degraded by the 26S proteasome.</text>
</comment>
<comment type="subunit">
    <text evidence="1">The APC/C is composed of at least 13 subunits: apc1, apc2, nuc2, apc4, apc5, cut9, apc8, apc10, apc11, hcn1, apc13, apc14 and apc15.</text>
</comment>
<comment type="similarity">
    <text evidence="2">Belongs to the APC5 family.</text>
</comment>
<sequence length="744" mass="86049">MQSPAMSMVTPIFPIPLKTNSSKKNFYTTFLTPHKLTLCLLIELYAHRIIQPQHCVPFLDLVLGYFNPNDSQPQTLTRIHDITSHLPSSIEEYSVYSLLHERLWSLHSFEDIHEIFISLGNYIEGVYDSEEEAPHMLFSSSSLLSIFLRKCVVEYEQFSFEQGVQFFKSFLQYRAPSMDFQHEGIEFCKINVRHELMNLASNKTLLQLAFGSIPVSRSSRDIEQLTQVQIEHMQKFGCALPLEMKEKLHDLLEVEENNLNTSYYCKFLNSWFSGDYQQSVENLCRYFDHIMHSDEKVSYQYALLNLAMLQADFGCNEEALHAIEDTINTARESGDTACLNFALAWMFEFKRSQYSNPSPEKNENDDQILEHLARNSQKAQLPILQTTVHLLQVQKFLDDGSSLIGVFSNLTKAFALFCANESFDGFPRYMDLLQSIWYRLGCSILSMTYISIYQKNHVHDSPALDLLQSLITKAWRYAELGRWLDVATILSTAEVQSQRSFQCAHLYGREKTFIYLSKAIDEKNHMDATLYLKNLNGFRHDKMSTFRTQLYALRLDISLGNLSQAIEGIDKLLEEPEKLAIEWVLQLMFLKVDIYMRTEMSNRAVFELLEIIQMASSNYLRLYLLRGLCTLCLIGELDCFTAIDLLDSLIPDIIAADNKPLLALAFHAFASLQIKHLDLLQPSRMFVIQLLDSAIDGYRACYMVEMQKTVVRLKIQYLRQINDPALQPNIEQYCSRFYSDNLLN</sequence>
<accession>Q9P4W7</accession>
<accession>Q9C1X6</accession>
<proteinExistence type="evidence at protein level"/>
<name>APC5_SCHPO</name>
<gene>
    <name type="primary">apc5</name>
    <name type="ORF">SPAC959.09c</name>
    <name type="ORF">SPAP32A8.01c</name>
</gene>
<feature type="chain" id="PRO_0000064624" description="Anaphase-promoting complex subunit 5">
    <location>
        <begin position="1"/>
        <end position="744"/>
    </location>
</feature>
<reference key="1">
    <citation type="journal article" date="2002" name="Nature">
        <title>The genome sequence of Schizosaccharomyces pombe.</title>
        <authorList>
            <person name="Wood V."/>
            <person name="Gwilliam R."/>
            <person name="Rajandream M.A."/>
            <person name="Lyne M.H."/>
            <person name="Lyne R."/>
            <person name="Stewart A."/>
            <person name="Sgouros J.G."/>
            <person name="Peat N."/>
            <person name="Hayles J."/>
            <person name="Baker S.G."/>
            <person name="Basham D."/>
            <person name="Bowman S."/>
            <person name="Brooks K."/>
            <person name="Brown D."/>
            <person name="Brown S."/>
            <person name="Chillingworth T."/>
            <person name="Churcher C.M."/>
            <person name="Collins M."/>
            <person name="Connor R."/>
            <person name="Cronin A."/>
            <person name="Davis P."/>
            <person name="Feltwell T."/>
            <person name="Fraser A."/>
            <person name="Gentles S."/>
            <person name="Goble A."/>
            <person name="Hamlin N."/>
            <person name="Harris D.E."/>
            <person name="Hidalgo J."/>
            <person name="Hodgson G."/>
            <person name="Holroyd S."/>
            <person name="Hornsby T."/>
            <person name="Howarth S."/>
            <person name="Huckle E.J."/>
            <person name="Hunt S."/>
            <person name="Jagels K."/>
            <person name="James K.D."/>
            <person name="Jones L."/>
            <person name="Jones M."/>
            <person name="Leather S."/>
            <person name="McDonald S."/>
            <person name="McLean J."/>
            <person name="Mooney P."/>
            <person name="Moule S."/>
            <person name="Mungall K.L."/>
            <person name="Murphy L.D."/>
            <person name="Niblett D."/>
            <person name="Odell C."/>
            <person name="Oliver K."/>
            <person name="O'Neil S."/>
            <person name="Pearson D."/>
            <person name="Quail M.A."/>
            <person name="Rabbinowitsch E."/>
            <person name="Rutherford K.M."/>
            <person name="Rutter S."/>
            <person name="Saunders D."/>
            <person name="Seeger K."/>
            <person name="Sharp S."/>
            <person name="Skelton J."/>
            <person name="Simmonds M.N."/>
            <person name="Squares R."/>
            <person name="Squares S."/>
            <person name="Stevens K."/>
            <person name="Taylor K."/>
            <person name="Taylor R.G."/>
            <person name="Tivey A."/>
            <person name="Walsh S.V."/>
            <person name="Warren T."/>
            <person name="Whitehead S."/>
            <person name="Woodward J.R."/>
            <person name="Volckaert G."/>
            <person name="Aert R."/>
            <person name="Robben J."/>
            <person name="Grymonprez B."/>
            <person name="Weltjens I."/>
            <person name="Vanstreels E."/>
            <person name="Rieger M."/>
            <person name="Schaefer M."/>
            <person name="Mueller-Auer S."/>
            <person name="Gabel C."/>
            <person name="Fuchs M."/>
            <person name="Duesterhoeft A."/>
            <person name="Fritzc C."/>
            <person name="Holzer E."/>
            <person name="Moestl D."/>
            <person name="Hilbert H."/>
            <person name="Borzym K."/>
            <person name="Langer I."/>
            <person name="Beck A."/>
            <person name="Lehrach H."/>
            <person name="Reinhardt R."/>
            <person name="Pohl T.M."/>
            <person name="Eger P."/>
            <person name="Zimmermann W."/>
            <person name="Wedler H."/>
            <person name="Wambutt R."/>
            <person name="Purnelle B."/>
            <person name="Goffeau A."/>
            <person name="Cadieu E."/>
            <person name="Dreano S."/>
            <person name="Gloux S."/>
            <person name="Lelaure V."/>
            <person name="Mottier S."/>
            <person name="Galibert F."/>
            <person name="Aves S.J."/>
            <person name="Xiang Z."/>
            <person name="Hunt C."/>
            <person name="Moore K."/>
            <person name="Hurst S.M."/>
            <person name="Lucas M."/>
            <person name="Rochet M."/>
            <person name="Gaillardin C."/>
            <person name="Tallada V.A."/>
            <person name="Garzon A."/>
            <person name="Thode G."/>
            <person name="Daga R.R."/>
            <person name="Cruzado L."/>
            <person name="Jimenez J."/>
            <person name="Sanchez M."/>
            <person name="del Rey F."/>
            <person name="Benito J."/>
            <person name="Dominguez A."/>
            <person name="Revuelta J.L."/>
            <person name="Moreno S."/>
            <person name="Armstrong J."/>
            <person name="Forsburg S.L."/>
            <person name="Cerutti L."/>
            <person name="Lowe T."/>
            <person name="McCombie W.R."/>
            <person name="Paulsen I."/>
            <person name="Potashkin J."/>
            <person name="Shpakovski G.V."/>
            <person name="Ussery D."/>
            <person name="Barrell B.G."/>
            <person name="Nurse P."/>
        </authorList>
    </citation>
    <scope>NUCLEOTIDE SEQUENCE [LARGE SCALE GENOMIC DNA]</scope>
    <source>
        <strain>972 / ATCC 24843</strain>
    </source>
</reference>
<reference key="2">
    <citation type="journal article" date="2011" name="Science">
        <title>Comparative functional genomics of the fission yeasts.</title>
        <authorList>
            <person name="Rhind N."/>
            <person name="Chen Z."/>
            <person name="Yassour M."/>
            <person name="Thompson D.A."/>
            <person name="Haas B.J."/>
            <person name="Habib N."/>
            <person name="Wapinski I."/>
            <person name="Roy S."/>
            <person name="Lin M.F."/>
            <person name="Heiman D.I."/>
            <person name="Young S.K."/>
            <person name="Furuya K."/>
            <person name="Guo Y."/>
            <person name="Pidoux A."/>
            <person name="Chen H.M."/>
            <person name="Robbertse B."/>
            <person name="Goldberg J.M."/>
            <person name="Aoki K."/>
            <person name="Bayne E.H."/>
            <person name="Berlin A.M."/>
            <person name="Desjardins C.A."/>
            <person name="Dobbs E."/>
            <person name="Dukaj L."/>
            <person name="Fan L."/>
            <person name="FitzGerald M.G."/>
            <person name="French C."/>
            <person name="Gujja S."/>
            <person name="Hansen K."/>
            <person name="Keifenheim D."/>
            <person name="Levin J.Z."/>
            <person name="Mosher R.A."/>
            <person name="Mueller C.A."/>
            <person name="Pfiffner J."/>
            <person name="Priest M."/>
            <person name="Russ C."/>
            <person name="Smialowska A."/>
            <person name="Swoboda P."/>
            <person name="Sykes S.M."/>
            <person name="Vaughn M."/>
            <person name="Vengrova S."/>
            <person name="Yoder R."/>
            <person name="Zeng Q."/>
            <person name="Allshire R."/>
            <person name="Baulcombe D."/>
            <person name="Birren B.W."/>
            <person name="Brown W."/>
            <person name="Ekwall K."/>
            <person name="Kellis M."/>
            <person name="Leatherwood J."/>
            <person name="Levin H."/>
            <person name="Margalit H."/>
            <person name="Martienssen R."/>
            <person name="Nieduszynski C.A."/>
            <person name="Spatafora J.W."/>
            <person name="Friedman N."/>
            <person name="Dalgaard J.Z."/>
            <person name="Baumann P."/>
            <person name="Niki H."/>
            <person name="Regev A."/>
            <person name="Nusbaum C."/>
        </authorList>
    </citation>
    <scope>REVISION OF GENE MODEL</scope>
</reference>
<reference key="3">
    <citation type="journal article" date="2002" name="Curr. Biol.">
        <title>Proteomics analysis identifies new components of the fission and budding yeast anaphase-promoting complexes.</title>
        <authorList>
            <person name="Yoon H.-J."/>
            <person name="Feoktistova A."/>
            <person name="Wolfe B.A."/>
            <person name="Jennings J.L."/>
            <person name="Link A.J."/>
            <person name="Gould K.L."/>
        </authorList>
    </citation>
    <scope>SUBUNIT</scope>
</reference>
<evidence type="ECO:0000269" key="1">
    <source>
    </source>
</evidence>
<evidence type="ECO:0000305" key="2"/>
<dbReference type="EMBL" id="CU329670">
    <property type="protein sequence ID" value="CAB93016.3"/>
    <property type="molecule type" value="Genomic_DNA"/>
</dbReference>
<dbReference type="RefSeq" id="XP_001713082.2">
    <property type="nucleotide sequence ID" value="XM_001713030.2"/>
</dbReference>
<dbReference type="SMR" id="Q9P4W7"/>
<dbReference type="BioGRID" id="279777">
    <property type="interactions" value="6"/>
</dbReference>
<dbReference type="ComplexPortal" id="CPX-763">
    <property type="entry name" value="Anaphase-promoting complex"/>
</dbReference>
<dbReference type="ComplexPortal" id="CPX-764">
    <property type="entry name" value="Anaphase-promoting complex, slp1 variant"/>
</dbReference>
<dbReference type="ComplexPortal" id="CPX-765">
    <property type="entry name" value="Anaphase-promoting complex, srw1 variant"/>
</dbReference>
<dbReference type="ComplexPortal" id="CPX-766">
    <property type="entry name" value="Anaphase-promoting complex, mfr1 variant"/>
</dbReference>
<dbReference type="FunCoup" id="Q9P4W7">
    <property type="interactions" value="263"/>
</dbReference>
<dbReference type="IntAct" id="Q9P4W7">
    <property type="interactions" value="2"/>
</dbReference>
<dbReference type="STRING" id="284812.Q9P4W7"/>
<dbReference type="iPTMnet" id="Q9P4W7"/>
<dbReference type="PaxDb" id="4896-SPAC959.09c.1"/>
<dbReference type="EnsemblFungi" id="SPAC959.09c.1">
    <property type="protein sequence ID" value="SPAC959.09c.1:pep"/>
    <property type="gene ID" value="SPAC959.09c"/>
</dbReference>
<dbReference type="PomBase" id="SPAC959.09c">
    <property type="gene designation" value="apc5"/>
</dbReference>
<dbReference type="VEuPathDB" id="FungiDB:SPAC959.09c"/>
<dbReference type="eggNOG" id="KOG4322">
    <property type="taxonomic scope" value="Eukaryota"/>
</dbReference>
<dbReference type="HOGENOM" id="CLU_367284_0_0_1"/>
<dbReference type="InParanoid" id="Q9P4W7"/>
<dbReference type="OMA" id="FLTPHKF"/>
<dbReference type="Reactome" id="R-SPO-983168">
    <property type="pathway name" value="Antigen processing: Ubiquitination &amp; Proteasome degradation"/>
</dbReference>
<dbReference type="PRO" id="PR:Q9P4W7"/>
<dbReference type="Proteomes" id="UP000002485">
    <property type="component" value="Chromosome I"/>
</dbReference>
<dbReference type="GO" id="GO:0005680">
    <property type="term" value="C:anaphase-promoting complex"/>
    <property type="evidence" value="ECO:0000314"/>
    <property type="project" value="PomBase"/>
</dbReference>
<dbReference type="GO" id="GO:0005634">
    <property type="term" value="C:nucleus"/>
    <property type="evidence" value="ECO:0000269"/>
    <property type="project" value="PomBase"/>
</dbReference>
<dbReference type="GO" id="GO:0031145">
    <property type="term" value="P:anaphase-promoting complex-dependent catabolic process"/>
    <property type="evidence" value="ECO:0000318"/>
    <property type="project" value="GO_Central"/>
</dbReference>
<dbReference type="GO" id="GO:0051301">
    <property type="term" value="P:cell division"/>
    <property type="evidence" value="ECO:0007669"/>
    <property type="project" value="UniProtKB-KW"/>
</dbReference>
<dbReference type="GO" id="GO:0051306">
    <property type="term" value="P:mitotic sister chromatid separation"/>
    <property type="evidence" value="ECO:0000305"/>
    <property type="project" value="PomBase"/>
</dbReference>
<dbReference type="GO" id="GO:0045842">
    <property type="term" value="P:positive regulation of mitotic metaphase/anaphase transition"/>
    <property type="evidence" value="ECO:0000318"/>
    <property type="project" value="GO_Central"/>
</dbReference>
<dbReference type="GO" id="GO:0070979">
    <property type="term" value="P:protein K11-linked ubiquitination"/>
    <property type="evidence" value="ECO:0000318"/>
    <property type="project" value="GO_Central"/>
</dbReference>
<dbReference type="InterPro" id="IPR037679">
    <property type="entry name" value="Apc5"/>
</dbReference>
<dbReference type="InterPro" id="IPR026000">
    <property type="entry name" value="Apc5_dom"/>
</dbReference>
<dbReference type="PANTHER" id="PTHR12830">
    <property type="entry name" value="ANAPHASE-PROMOTING COMPLEX SUBUNIT 5"/>
    <property type="match status" value="1"/>
</dbReference>
<dbReference type="PANTHER" id="PTHR12830:SF9">
    <property type="entry name" value="ANAPHASE-PROMOTING COMPLEX SUBUNIT 5"/>
    <property type="match status" value="1"/>
</dbReference>
<dbReference type="Pfam" id="PF12862">
    <property type="entry name" value="ANAPC5"/>
    <property type="match status" value="1"/>
</dbReference>